<name>GCH1_STRPG</name>
<protein>
    <recommendedName>
        <fullName evidence="2">GTP cyclohydrolase 1</fullName>
        <ecNumber evidence="2">3.5.4.16</ecNumber>
    </recommendedName>
    <alternativeName>
        <fullName evidence="2">GTP cyclohydrolase I</fullName>
        <shortName evidence="2">GTP-CH-I</shortName>
    </alternativeName>
</protein>
<reference key="1">
    <citation type="journal article" date="2007" name="J. Bacteriol.">
        <title>Complete genome of acute rheumatic fever-associated serotype M5 Streptococcus pyogenes strain Manfredo.</title>
        <authorList>
            <person name="Holden M.T.G."/>
            <person name="Scott A."/>
            <person name="Cherevach I."/>
            <person name="Chillingworth T."/>
            <person name="Churcher C."/>
            <person name="Cronin A."/>
            <person name="Dowd L."/>
            <person name="Feltwell T."/>
            <person name="Hamlin N."/>
            <person name="Holroyd S."/>
            <person name="Jagels K."/>
            <person name="Moule S."/>
            <person name="Mungall K."/>
            <person name="Quail M.A."/>
            <person name="Price C."/>
            <person name="Rabbinowitsch E."/>
            <person name="Sharp S."/>
            <person name="Skelton J."/>
            <person name="Whitehead S."/>
            <person name="Barrell B.G."/>
            <person name="Kehoe M."/>
            <person name="Parkhill J."/>
        </authorList>
    </citation>
    <scope>NUCLEOTIDE SEQUENCE [LARGE SCALE GENOMIC DNA]</scope>
    <source>
        <strain>Manfredo</strain>
    </source>
</reference>
<feature type="chain" id="PRO_1000043746" description="GTP cyclohydrolase 1">
    <location>
        <begin position="1"/>
        <end position="194"/>
    </location>
</feature>
<feature type="binding site" evidence="2">
    <location>
        <position position="83"/>
    </location>
    <ligand>
        <name>Zn(2+)</name>
        <dbReference type="ChEBI" id="CHEBI:29105"/>
    </ligand>
</feature>
<feature type="binding site" evidence="2">
    <location>
        <position position="86"/>
    </location>
    <ligand>
        <name>Zn(2+)</name>
        <dbReference type="ChEBI" id="CHEBI:29105"/>
    </ligand>
</feature>
<feature type="binding site" evidence="2">
    <location>
        <position position="155"/>
    </location>
    <ligand>
        <name>Zn(2+)</name>
        <dbReference type="ChEBI" id="CHEBI:29105"/>
    </ligand>
</feature>
<comment type="catalytic activity">
    <reaction evidence="2">
        <text>GTP + H2O = 7,8-dihydroneopterin 3'-triphosphate + formate + H(+)</text>
        <dbReference type="Rhea" id="RHEA:17473"/>
        <dbReference type="ChEBI" id="CHEBI:15377"/>
        <dbReference type="ChEBI" id="CHEBI:15378"/>
        <dbReference type="ChEBI" id="CHEBI:15740"/>
        <dbReference type="ChEBI" id="CHEBI:37565"/>
        <dbReference type="ChEBI" id="CHEBI:58462"/>
        <dbReference type="EC" id="3.5.4.16"/>
    </reaction>
</comment>
<comment type="pathway">
    <text evidence="2">Cofactor biosynthesis; 7,8-dihydroneopterin triphosphate biosynthesis; 7,8-dihydroneopterin triphosphate from GTP: step 1/1.</text>
</comment>
<comment type="subunit">
    <text evidence="1">Toroid-shaped homodecamer, composed of two pentamers of five dimers.</text>
</comment>
<comment type="similarity">
    <text evidence="2">Belongs to the GTP cyclohydrolase I family.</text>
</comment>
<evidence type="ECO:0000250" key="1"/>
<evidence type="ECO:0000255" key="2">
    <source>
        <dbReference type="HAMAP-Rule" id="MF_00223"/>
    </source>
</evidence>
<sequence length="194" mass="21880">MKRERLMSINKEKAEAAIYQFLEAIGENPNREGLLDTPKRVAKMYAEMFLGLGKDPKEEFTAVFKEHHEDVVIVKDISFYSICEHHLVPFYGKAHIAYLPSDGRVTGLSKLARAVEVASKRPQLQERLTSQIADALVEALNPKGTLVMVEAEHMCMTMRGIKKPGSKTITTTARGLYKESRAERQEVISLMTKD</sequence>
<keyword id="KW-0342">GTP-binding</keyword>
<keyword id="KW-0378">Hydrolase</keyword>
<keyword id="KW-0479">Metal-binding</keyword>
<keyword id="KW-0547">Nucleotide-binding</keyword>
<keyword id="KW-0554">One-carbon metabolism</keyword>
<keyword id="KW-0862">Zinc</keyword>
<accession>A2REL9</accession>
<gene>
    <name evidence="2" type="primary">folE</name>
    <name type="ordered locus">SpyM50967</name>
</gene>
<dbReference type="EC" id="3.5.4.16" evidence="2"/>
<dbReference type="EMBL" id="AM295007">
    <property type="protein sequence ID" value="CAM30294.1"/>
    <property type="molecule type" value="Genomic_DNA"/>
</dbReference>
<dbReference type="SMR" id="A2REL9"/>
<dbReference type="KEGG" id="spf:SpyM50967"/>
<dbReference type="HOGENOM" id="CLU_049768_3_3_9"/>
<dbReference type="UniPathway" id="UPA00848">
    <property type="reaction ID" value="UER00151"/>
</dbReference>
<dbReference type="GO" id="GO:0005737">
    <property type="term" value="C:cytoplasm"/>
    <property type="evidence" value="ECO:0007669"/>
    <property type="project" value="TreeGrafter"/>
</dbReference>
<dbReference type="GO" id="GO:0005525">
    <property type="term" value="F:GTP binding"/>
    <property type="evidence" value="ECO:0007669"/>
    <property type="project" value="UniProtKB-KW"/>
</dbReference>
<dbReference type="GO" id="GO:0003934">
    <property type="term" value="F:GTP cyclohydrolase I activity"/>
    <property type="evidence" value="ECO:0007669"/>
    <property type="project" value="UniProtKB-UniRule"/>
</dbReference>
<dbReference type="GO" id="GO:0008270">
    <property type="term" value="F:zinc ion binding"/>
    <property type="evidence" value="ECO:0007669"/>
    <property type="project" value="UniProtKB-UniRule"/>
</dbReference>
<dbReference type="GO" id="GO:0006730">
    <property type="term" value="P:one-carbon metabolic process"/>
    <property type="evidence" value="ECO:0007669"/>
    <property type="project" value="UniProtKB-UniRule"/>
</dbReference>
<dbReference type="GO" id="GO:0006729">
    <property type="term" value="P:tetrahydrobiopterin biosynthetic process"/>
    <property type="evidence" value="ECO:0007669"/>
    <property type="project" value="TreeGrafter"/>
</dbReference>
<dbReference type="GO" id="GO:0046654">
    <property type="term" value="P:tetrahydrofolate biosynthetic process"/>
    <property type="evidence" value="ECO:0007669"/>
    <property type="project" value="UniProtKB-UniRule"/>
</dbReference>
<dbReference type="FunFam" id="1.10.286.10:FF:000001">
    <property type="entry name" value="GTP cyclohydrolase 1"/>
    <property type="match status" value="1"/>
</dbReference>
<dbReference type="FunFam" id="3.30.1130.10:FF:000001">
    <property type="entry name" value="GTP cyclohydrolase 1"/>
    <property type="match status" value="1"/>
</dbReference>
<dbReference type="Gene3D" id="1.10.286.10">
    <property type="match status" value="1"/>
</dbReference>
<dbReference type="Gene3D" id="3.30.1130.10">
    <property type="match status" value="1"/>
</dbReference>
<dbReference type="HAMAP" id="MF_00223">
    <property type="entry name" value="FolE"/>
    <property type="match status" value="1"/>
</dbReference>
<dbReference type="InterPro" id="IPR043133">
    <property type="entry name" value="GTP-CH-I_C/QueF"/>
</dbReference>
<dbReference type="InterPro" id="IPR043134">
    <property type="entry name" value="GTP-CH-I_N"/>
</dbReference>
<dbReference type="InterPro" id="IPR001474">
    <property type="entry name" value="GTP_CycHdrlase_I"/>
</dbReference>
<dbReference type="InterPro" id="IPR018234">
    <property type="entry name" value="GTP_CycHdrlase_I_CS"/>
</dbReference>
<dbReference type="InterPro" id="IPR020602">
    <property type="entry name" value="GTP_CycHdrlase_I_dom"/>
</dbReference>
<dbReference type="NCBIfam" id="TIGR00063">
    <property type="entry name" value="folE"/>
    <property type="match status" value="1"/>
</dbReference>
<dbReference type="NCBIfam" id="NF006825">
    <property type="entry name" value="PRK09347.1-2"/>
    <property type="match status" value="1"/>
</dbReference>
<dbReference type="NCBIfam" id="NF006826">
    <property type="entry name" value="PRK09347.1-3"/>
    <property type="match status" value="1"/>
</dbReference>
<dbReference type="PANTHER" id="PTHR11109:SF7">
    <property type="entry name" value="GTP CYCLOHYDROLASE 1"/>
    <property type="match status" value="1"/>
</dbReference>
<dbReference type="PANTHER" id="PTHR11109">
    <property type="entry name" value="GTP CYCLOHYDROLASE I"/>
    <property type="match status" value="1"/>
</dbReference>
<dbReference type="Pfam" id="PF01227">
    <property type="entry name" value="GTP_cyclohydroI"/>
    <property type="match status" value="1"/>
</dbReference>
<dbReference type="SUPFAM" id="SSF55620">
    <property type="entry name" value="Tetrahydrobiopterin biosynthesis enzymes-like"/>
    <property type="match status" value="1"/>
</dbReference>
<dbReference type="PROSITE" id="PS00859">
    <property type="entry name" value="GTP_CYCLOHYDROL_1_1"/>
    <property type="match status" value="1"/>
</dbReference>
<dbReference type="PROSITE" id="PS00860">
    <property type="entry name" value="GTP_CYCLOHYDROL_1_2"/>
    <property type="match status" value="1"/>
</dbReference>
<proteinExistence type="inferred from homology"/>
<organism>
    <name type="scientific">Streptococcus pyogenes serotype M5 (strain Manfredo)</name>
    <dbReference type="NCBI Taxonomy" id="160491"/>
    <lineage>
        <taxon>Bacteria</taxon>
        <taxon>Bacillati</taxon>
        <taxon>Bacillota</taxon>
        <taxon>Bacilli</taxon>
        <taxon>Lactobacillales</taxon>
        <taxon>Streptococcaceae</taxon>
        <taxon>Streptococcus</taxon>
    </lineage>
</organism>